<keyword id="KW-0002">3D-structure</keyword>
<keyword id="KW-0067">ATP-binding</keyword>
<keyword id="KW-0175">Coiled coil</keyword>
<keyword id="KW-0227">DNA damage</keyword>
<keyword id="KW-0234">DNA repair</keyword>
<keyword id="KW-0378">Hydrolase</keyword>
<keyword id="KW-0479">Metal-binding</keyword>
<keyword id="KW-0547">Nucleotide-binding</keyword>
<keyword id="KW-1185">Reference proteome</keyword>
<keyword id="KW-0862">Zinc</keyword>
<dbReference type="EC" id="3.6.-.-" evidence="6 9"/>
<dbReference type="EMBL" id="AE000512">
    <property type="protein sequence ID" value="AAD36703.1"/>
    <property type="molecule type" value="Genomic_DNA"/>
</dbReference>
<dbReference type="PIR" id="D72230">
    <property type="entry name" value="D72230"/>
</dbReference>
<dbReference type="RefSeq" id="NP_229436.1">
    <property type="nucleotide sequence ID" value="NC_000853.1"/>
</dbReference>
<dbReference type="RefSeq" id="WP_004082116.1">
    <property type="nucleotide sequence ID" value="NC_000853.1"/>
</dbReference>
<dbReference type="PDB" id="3QF7">
    <property type="method" value="X-ray"/>
    <property type="resolution" value="1.90 A"/>
    <property type="chains" value="A/B=1-190, A/B=686-852"/>
</dbReference>
<dbReference type="PDB" id="3QG5">
    <property type="method" value="X-ray"/>
    <property type="resolution" value="3.40 A"/>
    <property type="chains" value="A/B=1-190, A/B=686-852"/>
</dbReference>
<dbReference type="PDB" id="3THO">
    <property type="method" value="X-ray"/>
    <property type="resolution" value="2.61 A"/>
    <property type="chains" value="A=1-190, A=686-852"/>
</dbReference>
<dbReference type="PDB" id="4W9M">
    <property type="method" value="X-ray"/>
    <property type="resolution" value="2.70 A"/>
    <property type="chains" value="C/E/I/K=1-188, C/E/I/K=687-852"/>
</dbReference>
<dbReference type="PDBsum" id="3QF7"/>
<dbReference type="PDBsum" id="3QG5"/>
<dbReference type="PDBsum" id="3THO"/>
<dbReference type="PDBsum" id="4W9M"/>
<dbReference type="SMR" id="Q9X1X1"/>
<dbReference type="IntAct" id="Q9X1X1">
    <property type="interactions" value="1"/>
</dbReference>
<dbReference type="STRING" id="243274.TM_1636"/>
<dbReference type="PaxDb" id="243274-THEMA_06065"/>
<dbReference type="EnsemblBacteria" id="AAD36703">
    <property type="protein sequence ID" value="AAD36703"/>
    <property type="gene ID" value="TM_1636"/>
</dbReference>
<dbReference type="KEGG" id="tma:TM1636"/>
<dbReference type="KEGG" id="tmi:THEMA_06065"/>
<dbReference type="KEGG" id="tmm:Tmari_1645"/>
<dbReference type="KEGG" id="tmw:THMA_1677"/>
<dbReference type="eggNOG" id="COG0419">
    <property type="taxonomic scope" value="Bacteria"/>
</dbReference>
<dbReference type="InParanoid" id="Q9X1X1"/>
<dbReference type="OrthoDB" id="9795626at2"/>
<dbReference type="Proteomes" id="UP000008183">
    <property type="component" value="Chromosome"/>
</dbReference>
<dbReference type="GO" id="GO:1990391">
    <property type="term" value="C:DNA repair complex"/>
    <property type="evidence" value="ECO:0000318"/>
    <property type="project" value="GO_Central"/>
</dbReference>
<dbReference type="GO" id="GO:0005524">
    <property type="term" value="F:ATP binding"/>
    <property type="evidence" value="ECO:0007669"/>
    <property type="project" value="UniProtKB-KW"/>
</dbReference>
<dbReference type="GO" id="GO:0016887">
    <property type="term" value="F:ATP hydrolysis activity"/>
    <property type="evidence" value="ECO:0000314"/>
    <property type="project" value="UniProtKB"/>
</dbReference>
<dbReference type="GO" id="GO:0003677">
    <property type="term" value="F:DNA binding"/>
    <property type="evidence" value="ECO:0000314"/>
    <property type="project" value="UniProtKB"/>
</dbReference>
<dbReference type="GO" id="GO:0004529">
    <property type="term" value="F:DNA exonuclease activity"/>
    <property type="evidence" value="ECO:0000318"/>
    <property type="project" value="GO_Central"/>
</dbReference>
<dbReference type="GO" id="GO:0046872">
    <property type="term" value="F:metal ion binding"/>
    <property type="evidence" value="ECO:0007669"/>
    <property type="project" value="UniProtKB-KW"/>
</dbReference>
<dbReference type="GO" id="GO:0006281">
    <property type="term" value="P:DNA repair"/>
    <property type="evidence" value="ECO:0000318"/>
    <property type="project" value="GO_Central"/>
</dbReference>
<dbReference type="GO" id="GO:0006302">
    <property type="term" value="P:double-strand break repair"/>
    <property type="evidence" value="ECO:0000314"/>
    <property type="project" value="UniProtKB"/>
</dbReference>
<dbReference type="Gene3D" id="1.10.287.1490">
    <property type="match status" value="1"/>
</dbReference>
<dbReference type="Gene3D" id="1.10.287.660">
    <property type="entry name" value="Helix hairpin bin"/>
    <property type="match status" value="1"/>
</dbReference>
<dbReference type="Gene3D" id="3.40.50.300">
    <property type="entry name" value="P-loop containing nucleotide triphosphate hydrolases"/>
    <property type="match status" value="2"/>
</dbReference>
<dbReference type="InterPro" id="IPR029012">
    <property type="entry name" value="Helix_hairpin_bin_sf"/>
</dbReference>
<dbReference type="InterPro" id="IPR027417">
    <property type="entry name" value="P-loop_NTPase"/>
</dbReference>
<dbReference type="InterPro" id="IPR038729">
    <property type="entry name" value="Rad50/SbcC_AAA"/>
</dbReference>
<dbReference type="InterPro" id="IPR013134">
    <property type="entry name" value="Zn_hook_RAD50"/>
</dbReference>
<dbReference type="PANTHER" id="PTHR32114">
    <property type="entry name" value="ABC TRANSPORTER ABCH.3"/>
    <property type="match status" value="1"/>
</dbReference>
<dbReference type="PANTHER" id="PTHR32114:SF2">
    <property type="entry name" value="ABC TRANSPORTER ABCH.3"/>
    <property type="match status" value="1"/>
</dbReference>
<dbReference type="Pfam" id="PF13476">
    <property type="entry name" value="AAA_23"/>
    <property type="match status" value="1"/>
</dbReference>
<dbReference type="Pfam" id="PF13558">
    <property type="entry name" value="SbcC_Walker_B"/>
    <property type="match status" value="1"/>
</dbReference>
<dbReference type="SUPFAM" id="SSF52540">
    <property type="entry name" value="P-loop containing nucleoside triphosphate hydrolases"/>
    <property type="match status" value="2"/>
</dbReference>
<dbReference type="PROSITE" id="PS51131">
    <property type="entry name" value="ZN_HOOK"/>
    <property type="match status" value="1"/>
</dbReference>
<gene>
    <name evidence="7" type="primary">rad50</name>
    <name type="ordered locus">TM_1636</name>
</gene>
<name>RAD50_THEMA</name>
<comment type="function">
    <text evidence="4 5 6">Involved in DNA double-strand break repair (DSBR) (PubMed:21458667, PubMed:21937514, PubMed:25349191). The Rad50/Mre11 complex possesses single-strand endonuclease activity and ATP-dependent double-strand-specific 3'-5' exonuclease activity (PubMed:21458667, PubMed:21937514, PubMed:25349191). Rad50 provides an ATP-dependent control of Mre11 by positioning DNA ends into the Mre11 active site: ATP-binding induces a large structural change from an open form with accessible Mre11 nuclease sites into a closed form (PubMed:21458667, PubMed:21937514, PubMed:25349191).</text>
</comment>
<comment type="catalytic activity">
    <reaction evidence="6 9">
        <text>ATP + H2O = ADP + phosphate + H(+)</text>
        <dbReference type="Rhea" id="RHEA:13065"/>
        <dbReference type="ChEBI" id="CHEBI:15377"/>
        <dbReference type="ChEBI" id="CHEBI:15378"/>
        <dbReference type="ChEBI" id="CHEBI:30616"/>
        <dbReference type="ChEBI" id="CHEBI:43474"/>
        <dbReference type="ChEBI" id="CHEBI:456216"/>
    </reaction>
</comment>
<comment type="cofactor">
    <cofactor evidence="1">
        <name>Zn(2+)</name>
        <dbReference type="ChEBI" id="CHEBI:29105"/>
    </cofactor>
    <text evidence="1">Binds 1 zinc ion per homodimer.</text>
</comment>
<comment type="subunit">
    <text evidence="4 5 6">Homodimer (PubMed:21458667, PubMed:21937514, PubMed:25349191). Forms a complex with Mre11 (PubMed:21458667, PubMed:21937514).</text>
</comment>
<comment type="interaction">
    <interactant intactId="EBI-3954207">
        <id>Q9X1X1</id>
    </interactant>
    <interactant intactId="EBI-3954204">
        <id>Q9X1X0</id>
        <label>mre11</label>
    </interactant>
    <organismsDiffer>false</organismsDiffer>
    <experiments>3</experiments>
</comment>
<comment type="domain">
    <text evidence="1">The two conserved Cys that bind zinc constitute the zinc-hook, which separates the large intramolecular coiled coil regions. The 2 Cys residues coordinate one molecule of zinc with the help of the 2 Cys residues of the zinc-hook of another Rad50 molecule, thereby forming a V-shaped homodimer.</text>
</comment>
<comment type="similarity">
    <text evidence="8">Belongs to the SMC family. RAD50 subfamily.</text>
</comment>
<accession>Q9X1X1</accession>
<reference key="1">
    <citation type="journal article" date="1999" name="Nature">
        <title>Evidence for lateral gene transfer between Archaea and Bacteria from genome sequence of Thermotoga maritima.</title>
        <authorList>
            <person name="Nelson K.E."/>
            <person name="Clayton R.A."/>
            <person name="Gill S.R."/>
            <person name="Gwinn M.L."/>
            <person name="Dodson R.J."/>
            <person name="Haft D.H."/>
            <person name="Hickey E.K."/>
            <person name="Peterson J.D."/>
            <person name="Nelson W.C."/>
            <person name="Ketchum K.A."/>
            <person name="McDonald L.A."/>
            <person name="Utterback T.R."/>
            <person name="Malek J.A."/>
            <person name="Linher K.D."/>
            <person name="Garrett M.M."/>
            <person name="Stewart A.M."/>
            <person name="Cotton M.D."/>
            <person name="Pratt M.S."/>
            <person name="Phillips C.A."/>
            <person name="Richardson D.L."/>
            <person name="Heidelberg J.F."/>
            <person name="Sutton G.G."/>
            <person name="Fleischmann R.D."/>
            <person name="Eisen J.A."/>
            <person name="White O."/>
            <person name="Salzberg S.L."/>
            <person name="Smith H.O."/>
            <person name="Venter J.C."/>
            <person name="Fraser C.M."/>
        </authorList>
    </citation>
    <scope>NUCLEOTIDE SEQUENCE [LARGE SCALE GENOMIC DNA]</scope>
    <source>
        <strain>ATCC 43589 / DSM 3109 / JCM 10099 / NBRC 100826 / MSB8</strain>
    </source>
</reference>
<reference evidence="12 13" key="2">
    <citation type="journal article" date="2011" name="Cell">
        <title>The Mre11:Rad50 structure shows an ATP-dependent molecular clamp in DNA double-strand break repair.</title>
        <authorList>
            <person name="Lammens K."/>
            <person name="Bemeleit D.J."/>
            <person name="Moeckel C."/>
            <person name="Clausing E."/>
            <person name="Schele A."/>
            <person name="Hartung S."/>
            <person name="Schiller C.B."/>
            <person name="Lucas M."/>
            <person name="Angermueller C."/>
            <person name="Soeding J."/>
            <person name="Straesser K."/>
            <person name="Hopfner K.P."/>
        </authorList>
    </citation>
    <scope>X-RAY CRYSTALLOGRAPHY (1.90 ANGSTROMS) OF 1-190 AND 686-852 IN COMPLEX WITH MRE11; MAGNESIUM AND ATP ANALOG</scope>
    <scope>FUNCTION</scope>
    <scope>SUBUNIT</scope>
    <scope>INTERACTION WITH MRE11</scope>
</reference>
<reference evidence="14" key="3">
    <citation type="journal article" date="2012" name="Nucleic Acids Res.">
        <title>ATP driven structural changes of the bacterial Mre11:Rad50 catalytic head complex.</title>
        <authorList>
            <person name="Moeckel C."/>
            <person name="Lammens K."/>
            <person name="Schele A."/>
            <person name="Hopfner K.P."/>
        </authorList>
    </citation>
    <scope>X-RAY CRYSTALLOGRAPHY (2.61 ANGSTROMS) OF 1-190 AND 686-852 IN COMPLEX WITH ADP</scope>
    <scope>FUNCTION</scope>
    <scope>INTERACTION WITH MRE11</scope>
</reference>
<reference evidence="15" key="4">
    <citation type="journal article" date="2014" name="EMBO J.">
        <title>Structure of the Rad50 DNA double-strand break repair protein in complex with DNA.</title>
        <authorList>
            <person name="Rojowska A."/>
            <person name="Lammens K."/>
            <person name="Seifert F.U."/>
            <person name="Direnberger C."/>
            <person name="Feldmann H."/>
            <person name="Hopfner K.P."/>
        </authorList>
    </citation>
    <scope>X-RAY CRYSTALLOGRAPHY (2.70 ANGSTROMS) OF 1-188 AND 687-852 IN COMPLEX WITH ATP ANALOG AND MAGNESIUM</scope>
    <scope>FUNCTION</scope>
    <scope>CATALYTIC ACTIVITY</scope>
    <scope>SUBUNIT</scope>
    <scope>MUTAGENESIS OF ARG-94; LYS-95; LYS-115; LYS-175 AND LYS-182</scope>
</reference>
<proteinExistence type="evidence at protein level"/>
<protein>
    <recommendedName>
        <fullName evidence="8">DNA double-strand break repair Rad50 ATPase</fullName>
        <ecNumber evidence="6 9">3.6.-.-</ecNumber>
    </recommendedName>
</protein>
<evidence type="ECO:0000250" key="1">
    <source>
        <dbReference type="UniProtKB" id="P58301"/>
    </source>
</evidence>
<evidence type="ECO:0000255" key="2"/>
<evidence type="ECO:0000255" key="3">
    <source>
        <dbReference type="PROSITE-ProRule" id="PRU00471"/>
    </source>
</evidence>
<evidence type="ECO:0000269" key="4">
    <source>
    </source>
</evidence>
<evidence type="ECO:0000269" key="5">
    <source>
    </source>
</evidence>
<evidence type="ECO:0000269" key="6">
    <source>
    </source>
</evidence>
<evidence type="ECO:0000303" key="7">
    <source>
    </source>
</evidence>
<evidence type="ECO:0000305" key="8"/>
<evidence type="ECO:0000305" key="9">
    <source>
    </source>
</evidence>
<evidence type="ECO:0000305" key="10">
    <source>
    </source>
</evidence>
<evidence type="ECO:0000305" key="11">
    <source>
    </source>
</evidence>
<evidence type="ECO:0007744" key="12">
    <source>
        <dbReference type="PDB" id="3QF7"/>
    </source>
</evidence>
<evidence type="ECO:0007744" key="13">
    <source>
        <dbReference type="PDB" id="3QG5"/>
    </source>
</evidence>
<evidence type="ECO:0007744" key="14">
    <source>
        <dbReference type="PDB" id="3THO"/>
    </source>
</evidence>
<evidence type="ECO:0007744" key="15">
    <source>
        <dbReference type="PDB" id="4W9M"/>
    </source>
</evidence>
<evidence type="ECO:0007829" key="16">
    <source>
        <dbReference type="PDB" id="3QF7"/>
    </source>
</evidence>
<evidence type="ECO:0007829" key="17">
    <source>
        <dbReference type="PDB" id="3QG5"/>
    </source>
</evidence>
<evidence type="ECO:0007829" key="18">
    <source>
        <dbReference type="PDB" id="3THO"/>
    </source>
</evidence>
<sequence>MRPERLTVRNFLGLKNVDIEFQSGITVVEGPNGAGKSSLFEAISFALFGNGIRYPNSYDYVNRNAVDGTARLVFQFERGGKRYEIIREINALQRKHNAKLSEILENGKKAAIAAKPTSVKQEVEKILGIEHRTFIRTVFLPQGEIDKLLISPPSEITEIISDVFQSKETLEKLEKLLKEKMKKLENEISSLQALYTAIWKYLEENDLEVLKSELKTVSEKKKELLKKREELQKEEEQLKRLLEKYRELVKKKERLRVLSLRRNELQKEVIYEQKVKKAKELEPLFREIYLRQREFERFSQELNSREKRYKELESEKEAISKEIPVHRERLSKLEEIGEKIKEELDLLEKVLKASRPLLEQRIRLKENLTRLEEEFRRLVGEKEKREKELLSIEKTENETKNELEKLLDELSILKKDHMKWLAYQIASSLNEGDTCPVCGGVFHGKVEAVEFNIDEFEKLDQKRSELENTLNVLKERKKSLSSLIEDLLMKIEEGKKNLKSIRNQIEKIEEELHRLGYSEDLEEKLDEKRKKLRKIEEERHSISQKITAADVQISQIENQLKEIKGEIEAKRETLKEQREEMDQLKSDFFDRLRKIGIGFEEFRILVKEEVKDAEKELGVVETEIRLLEESLKELESENVRDVSEDYEKVRNQLEALSQEISDLERKEGRLNHLIEETLRRERELKSLEKKLKEMSDEYNNLDLLRKYLFDKSNFSRYFTGRVLEAVLKRTKAYLDILTNGRFDIDFDDEKGGFIIKDWGIERPARGLSGGERALISISLAMSLAEVASGRLDAFFIDEGFSSLDTENKEKIASVLKELERLNKVIVFITHDREFSEAFDRKLRITGGVVVNE</sequence>
<feature type="chain" id="PRO_0000138670" description="DNA double-strand break repair Rad50 ATPase">
    <location>
        <begin position="1"/>
        <end position="852"/>
    </location>
</feature>
<feature type="domain" description="Zinc-hook" evidence="3">
    <location>
        <begin position="389"/>
        <end position="488"/>
    </location>
</feature>
<feature type="coiled-coil region" evidence="2">
    <location>
        <begin position="155"/>
        <end position="345"/>
    </location>
</feature>
<feature type="coiled-coil region" evidence="2">
    <location>
        <begin position="389"/>
        <end position="427"/>
    </location>
</feature>
<feature type="coiled-coil region" evidence="2">
    <location>
        <begin position="460"/>
        <end position="488"/>
    </location>
</feature>
<feature type="coiled-coil region" evidence="2">
    <location>
        <begin position="534"/>
        <end position="711"/>
    </location>
</feature>
<feature type="binding site" evidence="9 12">
    <location>
        <position position="32"/>
    </location>
    <ligand>
        <name>ATP</name>
        <dbReference type="ChEBI" id="CHEBI:30616"/>
    </ligand>
</feature>
<feature type="binding site" evidence="10 14">
    <location>
        <position position="33"/>
    </location>
    <ligand>
        <name>ATP</name>
        <dbReference type="ChEBI" id="CHEBI:30616"/>
    </ligand>
</feature>
<feature type="binding site" evidence="10 14">
    <location>
        <position position="34"/>
    </location>
    <ligand>
        <name>ATP</name>
        <dbReference type="ChEBI" id="CHEBI:30616"/>
    </ligand>
</feature>
<feature type="binding site" evidence="9 10 11 12 14 15">
    <location>
        <position position="35"/>
    </location>
    <ligand>
        <name>ATP</name>
        <dbReference type="ChEBI" id="CHEBI:30616"/>
    </ligand>
</feature>
<feature type="binding site" evidence="9 10 11 12 14 15">
    <location>
        <position position="36"/>
    </location>
    <ligand>
        <name>ATP</name>
        <dbReference type="ChEBI" id="CHEBI:30616"/>
    </ligand>
</feature>
<feature type="binding site" evidence="9 10 11 12 14 15">
    <location>
        <position position="37"/>
    </location>
    <ligand>
        <name>ATP</name>
        <dbReference type="ChEBI" id="CHEBI:30616"/>
    </ligand>
</feature>
<feature type="binding site" evidence="9 11 12 15">
    <location>
        <position position="37"/>
    </location>
    <ligand>
        <name>Mg(2+)</name>
        <dbReference type="ChEBI" id="CHEBI:18420"/>
    </ligand>
</feature>
<feature type="binding site" evidence="9 10 11 12 14 15">
    <location>
        <position position="38"/>
    </location>
    <ligand>
        <name>ATP</name>
        <dbReference type="ChEBI" id="CHEBI:30616"/>
    </ligand>
</feature>
<feature type="binding site" evidence="9 10 11 12 14 15">
    <location>
        <position position="53"/>
    </location>
    <ligand>
        <name>ATP</name>
        <dbReference type="ChEBI" id="CHEBI:30616"/>
    </ligand>
</feature>
<feature type="binding site" evidence="10 14">
    <location>
        <position position="54"/>
    </location>
    <ligand>
        <name>ATP</name>
        <dbReference type="ChEBI" id="CHEBI:30616"/>
    </ligand>
</feature>
<feature type="binding site" evidence="9 11 12 14 15">
    <location>
        <position position="59"/>
    </location>
    <ligand>
        <name>ATP</name>
        <dbReference type="ChEBI" id="CHEBI:30616"/>
    </ligand>
</feature>
<feature type="binding site" evidence="9 10 12 14">
    <location>
        <position position="61"/>
    </location>
    <ligand>
        <name>ATP</name>
        <dbReference type="ChEBI" id="CHEBI:30616"/>
    </ligand>
</feature>
<feature type="binding site" evidence="9 10 11 12 14 15">
    <location>
        <position position="63"/>
    </location>
    <ligand>
        <name>ATP</name>
        <dbReference type="ChEBI" id="CHEBI:30616"/>
    </ligand>
</feature>
<feature type="binding site" evidence="9 11 12 15">
    <location>
        <position position="142"/>
    </location>
    <ligand>
        <name>Mg(2+)</name>
        <dbReference type="ChEBI" id="CHEBI:18420"/>
    </ligand>
</feature>
<feature type="binding site" evidence="3">
    <location>
        <position position="435"/>
    </location>
    <ligand>
        <name>Zn(2+)</name>
        <dbReference type="ChEBI" id="CHEBI:29105"/>
    </ligand>
</feature>
<feature type="binding site" evidence="3">
    <location>
        <position position="438"/>
    </location>
    <ligand>
        <name>Zn(2+)</name>
        <dbReference type="ChEBI" id="CHEBI:29105"/>
    </ligand>
</feature>
<feature type="binding site" evidence="15">
    <location>
        <position position="797"/>
    </location>
    <ligand>
        <name>Mg(2+)</name>
        <dbReference type="ChEBI" id="CHEBI:18420"/>
    </ligand>
</feature>
<feature type="mutagenesis site" description="Decreased DNA-binding." evidence="6">
    <original>R</original>
    <variation>E</variation>
    <location>
        <position position="94"/>
    </location>
</feature>
<feature type="mutagenesis site" description="Decreased DNA-binding." evidence="6">
    <original>K</original>
    <variation>E</variation>
    <location>
        <position position="95"/>
    </location>
</feature>
<feature type="mutagenesis site" description="Strongly decreased DNA-binding." evidence="6">
    <original>K</original>
    <variation>E</variation>
    <location>
        <position position="115"/>
    </location>
</feature>
<feature type="mutagenesis site" description="Decreased DNA-binding." evidence="6">
    <original>K</original>
    <variation>E</variation>
    <location>
        <position position="175"/>
    </location>
</feature>
<feature type="mutagenesis site" description="Decreased DNA-binding." evidence="6">
    <original>K</original>
    <variation>E</variation>
    <location>
        <position position="182"/>
    </location>
</feature>
<feature type="strand" evidence="16">
    <location>
        <begin position="2"/>
        <end position="11"/>
    </location>
</feature>
<feature type="strand" evidence="16">
    <location>
        <begin position="14"/>
        <end position="20"/>
    </location>
</feature>
<feature type="strand" evidence="16">
    <location>
        <begin position="23"/>
        <end position="29"/>
    </location>
</feature>
<feature type="helix" evidence="16">
    <location>
        <begin position="36"/>
        <end position="48"/>
    </location>
</feature>
<feature type="helix" evidence="16">
    <location>
        <begin position="57"/>
        <end position="60"/>
    </location>
</feature>
<feature type="strand" evidence="18">
    <location>
        <begin position="65"/>
        <end position="67"/>
    </location>
</feature>
<feature type="strand" evidence="16">
    <location>
        <begin position="69"/>
        <end position="78"/>
    </location>
</feature>
<feature type="strand" evidence="16">
    <location>
        <begin position="81"/>
        <end position="90"/>
    </location>
</feature>
<feature type="turn" evidence="16">
    <location>
        <begin position="91"/>
        <end position="94"/>
    </location>
</feature>
<feature type="strand" evidence="16">
    <location>
        <begin position="95"/>
        <end position="103"/>
    </location>
</feature>
<feature type="strand" evidence="18">
    <location>
        <begin position="105"/>
        <end position="107"/>
    </location>
</feature>
<feature type="strand" evidence="16">
    <location>
        <begin position="109"/>
        <end position="115"/>
    </location>
</feature>
<feature type="helix" evidence="16">
    <location>
        <begin position="116"/>
        <end position="127"/>
    </location>
</feature>
<feature type="helix" evidence="16">
    <location>
        <begin position="131"/>
        <end position="137"/>
    </location>
</feature>
<feature type="strand" evidence="17">
    <location>
        <begin position="138"/>
        <end position="141"/>
    </location>
</feature>
<feature type="turn" evidence="16">
    <location>
        <begin position="145"/>
        <end position="150"/>
    </location>
</feature>
<feature type="helix" evidence="16">
    <location>
        <begin position="153"/>
        <end position="163"/>
    </location>
</feature>
<feature type="helix" evidence="16">
    <location>
        <begin position="167"/>
        <end position="189"/>
    </location>
</feature>
<feature type="helix" evidence="16">
    <location>
        <begin position="686"/>
        <end position="709"/>
    </location>
</feature>
<feature type="turn" evidence="16">
    <location>
        <begin position="711"/>
        <end position="713"/>
    </location>
</feature>
<feature type="helix" evidence="16">
    <location>
        <begin position="714"/>
        <end position="738"/>
    </location>
</feature>
<feature type="strand" evidence="16">
    <location>
        <begin position="742"/>
        <end position="747"/>
    </location>
</feature>
<feature type="turn" evidence="16">
    <location>
        <begin position="748"/>
        <end position="751"/>
    </location>
</feature>
<feature type="strand" evidence="16">
    <location>
        <begin position="752"/>
        <end position="757"/>
    </location>
</feature>
<feature type="strand" evidence="16">
    <location>
        <begin position="760"/>
        <end position="763"/>
    </location>
</feature>
<feature type="helix" evidence="16">
    <location>
        <begin position="764"/>
        <end position="766"/>
    </location>
</feature>
<feature type="helix" evidence="16">
    <location>
        <begin position="769"/>
        <end position="786"/>
    </location>
</feature>
<feature type="turn" evidence="16">
    <location>
        <begin position="787"/>
        <end position="790"/>
    </location>
</feature>
<feature type="strand" evidence="16">
    <location>
        <begin position="793"/>
        <end position="798"/>
    </location>
</feature>
<feature type="turn" evidence="18">
    <location>
        <begin position="799"/>
        <end position="802"/>
    </location>
</feature>
<feature type="helix" evidence="16">
    <location>
        <begin position="805"/>
        <end position="816"/>
    </location>
</feature>
<feature type="helix" evidence="16">
    <location>
        <begin position="817"/>
        <end position="820"/>
    </location>
</feature>
<feature type="strand" evidence="16">
    <location>
        <begin position="821"/>
        <end position="830"/>
    </location>
</feature>
<feature type="helix" evidence="16">
    <location>
        <begin position="832"/>
        <end position="835"/>
    </location>
</feature>
<feature type="strand" evidence="16">
    <location>
        <begin position="841"/>
        <end position="845"/>
    </location>
</feature>
<feature type="strand" evidence="16">
    <location>
        <begin position="848"/>
        <end position="850"/>
    </location>
</feature>
<organism>
    <name type="scientific">Thermotoga maritima (strain ATCC 43589 / DSM 3109 / JCM 10099 / NBRC 100826 / MSB8)</name>
    <dbReference type="NCBI Taxonomy" id="243274"/>
    <lineage>
        <taxon>Bacteria</taxon>
        <taxon>Thermotogati</taxon>
        <taxon>Thermotogota</taxon>
        <taxon>Thermotogae</taxon>
        <taxon>Thermotogales</taxon>
        <taxon>Thermotogaceae</taxon>
        <taxon>Thermotoga</taxon>
    </lineage>
</organism>